<proteinExistence type="evidence at transcript level"/>
<gene>
    <name evidence="5" type="primary">HYD1</name>
</gene>
<evidence type="ECO:0000250" key="1">
    <source>
        <dbReference type="UniProtKB" id="P52754"/>
    </source>
</evidence>
<evidence type="ECO:0000255" key="2"/>
<evidence type="ECO:0000269" key="3">
    <source>
    </source>
</evidence>
<evidence type="ECO:0000269" key="4">
    <source>
    </source>
</evidence>
<evidence type="ECO:0000303" key="5">
    <source>
    </source>
</evidence>
<evidence type="ECO:0000305" key="6"/>
<evidence type="ECO:0000305" key="7">
    <source>
    </source>
</evidence>
<organism>
    <name type="scientific">Gibberella moniliformis</name>
    <name type="common">Maize ear and stalk rot fungus</name>
    <name type="synonym">Fusarium verticillioides</name>
    <dbReference type="NCBI Taxonomy" id="117187"/>
    <lineage>
        <taxon>Eukaryota</taxon>
        <taxon>Fungi</taxon>
        <taxon>Dikarya</taxon>
        <taxon>Ascomycota</taxon>
        <taxon>Pezizomycotina</taxon>
        <taxon>Sordariomycetes</taxon>
        <taxon>Hypocreomycetidae</taxon>
        <taxon>Hypocreales</taxon>
        <taxon>Nectriaceae</taxon>
        <taxon>Fusarium</taxon>
        <taxon>Fusarium fujikuroi species complex</taxon>
    </lineage>
</organism>
<dbReference type="EMBL" id="AY155496">
    <property type="protein sequence ID" value="AAO16867.1"/>
    <property type="molecule type" value="Genomic_DNA"/>
</dbReference>
<dbReference type="SMR" id="Q6YF32"/>
<dbReference type="GO" id="GO:0005576">
    <property type="term" value="C:extracellular region"/>
    <property type="evidence" value="ECO:0007669"/>
    <property type="project" value="UniProtKB-KW"/>
</dbReference>
<dbReference type="GO" id="GO:0009277">
    <property type="term" value="C:fungal-type cell wall"/>
    <property type="evidence" value="ECO:0007669"/>
    <property type="project" value="InterPro"/>
</dbReference>
<dbReference type="GO" id="GO:0005199">
    <property type="term" value="F:structural constituent of cell wall"/>
    <property type="evidence" value="ECO:0007669"/>
    <property type="project" value="InterPro"/>
</dbReference>
<dbReference type="InterPro" id="IPR001338">
    <property type="entry name" value="Hydrophobin"/>
</dbReference>
<dbReference type="Pfam" id="PF01185">
    <property type="entry name" value="Hydrophobin"/>
    <property type="match status" value="1"/>
</dbReference>
<dbReference type="SMART" id="SM00075">
    <property type="entry name" value="HYDRO"/>
    <property type="match status" value="1"/>
</dbReference>
<comment type="function">
    <text evidence="3 7">Aerial growth, conidiation, and dispersal of filamentous fungi in the environment rely upon a capability of their secreting small amphipathic proteins called hydrophobins (HPBs) with low sequence identity. Class I can self-assemble into an outermost layer of rodlet bundles on aerial cell surfaces, conferring cellular hydrophobicity that supports fungal growth, development and dispersal; whereas Class II form highly ordered films at water-air interfaces through intermolecular interactions but contribute nothing to the rodlet structure (Probable). HYD1 and HYD2 are required for the structural integrity of the long aerial chains of microconidia (PubMed:15288021). Does not seem to be important for the ability to cause seedling disease (PubMed:15288021).</text>
</comment>
<comment type="subcellular location">
    <subcellularLocation>
        <location evidence="3">Secreted</location>
    </subcellularLocation>
    <subcellularLocation>
        <location evidence="3">Secreted</location>
        <location evidence="3">Cell wall</location>
    </subcellularLocation>
    <text evidence="3">Localizes to the outside of conidia, and more particularly to the junctions of individual microconidia.</text>
</comment>
<comment type="induction">
    <text evidence="4">Expression is positively regulated by the cAMP-protein kinase A (PKA) pathway and more specifically by the adenylate cyclase FAC1. In contrast, deletion of PKA catalytitic subunit CPK1 has no obvious effect on the expression of HYD1.</text>
</comment>
<comment type="disruption phenotype">
    <text evidence="3">Does not affect pathogenicity in a corn seedling infection assay nor the production of microconidia, but affects microconidial chain formation.</text>
</comment>
<comment type="similarity">
    <text evidence="6">Belongs to the fungal hydrophobin family.</text>
</comment>
<feature type="signal peptide" evidence="2">
    <location>
        <begin position="1"/>
        <end position="16"/>
    </location>
</feature>
<feature type="chain" id="PRO_5013987381" description="Class I hydrophobin 1">
    <location>
        <begin position="17"/>
        <end position="126"/>
    </location>
</feature>
<feature type="disulfide bond" evidence="1">
    <location>
        <begin position="38"/>
        <end position="100"/>
    </location>
</feature>
<feature type="disulfide bond" evidence="1">
    <location>
        <begin position="46"/>
        <end position="94"/>
    </location>
</feature>
<feature type="disulfide bond" evidence="1">
    <location>
        <begin position="47"/>
        <end position="75"/>
    </location>
</feature>
<feature type="disulfide bond" evidence="1">
    <location>
        <begin position="101"/>
        <end position="119"/>
    </location>
</feature>
<sequence>MQYMTIVAFLAATVAAGPQIRAYPSIDQITVAQANNACGNNMQVTCCNKVTNTPAGNAVGNGAGILNNLSLFDQCSKLDVNVLAIANGLLNKECQANAACCQNSGGSATGGLVNVALPCIALSSLI</sequence>
<protein>
    <recommendedName>
        <fullName evidence="5">Class I hydrophobin 1</fullName>
    </recommendedName>
</protein>
<reference key="1">
    <citation type="journal article" date="2004" name="Fungal Genet. Biol.">
        <title>Five hydrophobin genes in Fusarium verticillioides include two required for microconidial chain formation.</title>
        <authorList>
            <person name="Fuchs U."/>
            <person name="Czymmek K.J."/>
            <person name="Sweigard J.A."/>
        </authorList>
    </citation>
    <scope>NUCLEOTIDE SEQUENCE [GENOMIC DNA]</scope>
    <scope>FUNCTION</scope>
    <scope>DISRUPTION PHENOTYPE</scope>
    <scope>SUBCELLULAR LOCATION</scope>
    <source>
        <strain>M-3125</strain>
    </source>
</reference>
<reference key="2">
    <citation type="journal article" date="2010" name="Mol. Plant Microbe Interact.">
        <title>The cAMP signaling pathway in Fusarium verticillioides is important for conidiation, plant infection, and stress responses but not fumonisin production.</title>
        <authorList>
            <person name="Choi Y.E."/>
            <person name="Xu J.R."/>
        </authorList>
    </citation>
    <scope>INDUCTION</scope>
</reference>
<keyword id="KW-0134">Cell wall</keyword>
<keyword id="KW-1015">Disulfide bond</keyword>
<keyword id="KW-0964">Secreted</keyword>
<keyword id="KW-0732">Signal</keyword>
<keyword id="KW-0749">Sporulation</keyword>
<name>HYD1_GIBMO</name>
<accession>Q6YF32</accession>